<sequence>MSMLPSFGFTQEQVACVCEVLQQGGNLERLGRFLWSLPACDHLHKNESVLKAKAVVAFHRGNFRELYKILESHQFSPHNHPKLQQLWLKAHYVEAEKLRGRPLGAVGKYRVRRKFPLPRTIWDGEETSYCFKEKSRGVLREWYAHNPYPSPREKRELAEATGLTTTQVSNWFKNRRQRDRAAEAKERENTENNNSSSNKQNQLSPLEGGKPLMSSSEEEFSPPQSPDQNSVLLLQGNMGHARSSNYSLPGLTASQPSHGLQTHQHQLQDSLLGPLTSSLVDLGS</sequence>
<proteinExistence type="inferred from homology"/>
<evidence type="ECO:0000250" key="1"/>
<evidence type="ECO:0000250" key="2">
    <source>
        <dbReference type="UniProtKB" id="Q15475"/>
    </source>
</evidence>
<evidence type="ECO:0000250" key="3">
    <source>
        <dbReference type="UniProtKB" id="Q62231"/>
    </source>
</evidence>
<evidence type="ECO:0000255" key="4">
    <source>
        <dbReference type="PROSITE-ProRule" id="PRU00108"/>
    </source>
</evidence>
<evidence type="ECO:0000256" key="5">
    <source>
        <dbReference type="SAM" id="MobiDB-lite"/>
    </source>
</evidence>
<evidence type="ECO:0000305" key="6"/>
<name>SIX1_GORGO</name>
<reference key="1">
    <citation type="submission" date="2006-08" db="EMBL/GenBank/DDBJ databases">
        <title>Positive selection in transcription factor genes on the human lineage.</title>
        <authorList>
            <person name="Nickel G.C."/>
            <person name="Tefft D.L."/>
            <person name="Trevarthen K."/>
            <person name="Funt J."/>
            <person name="Adams M.D."/>
        </authorList>
    </citation>
    <scope>NUCLEOTIDE SEQUENCE [GENOMIC DNA]</scope>
</reference>
<protein>
    <recommendedName>
        <fullName>Homeobox protein SIX1</fullName>
    </recommendedName>
    <alternativeName>
        <fullName>Sine oculis homeobox homolog 1</fullName>
    </alternativeName>
</protein>
<comment type="function">
    <text evidence="2 3">Transcription factor that is involved in the regulation of cell proliferation, apoptosis and embryonic development (By similarity). Plays an important role in the development of several organs, including kidney, muscle and inner ear (By similarity). Depending on context, functions as a transcriptional repressor or activator (By similarity). Lacks an activation domain, and requires interaction with EYA family members for transcription activation (By similarity). Mediates nuclear translocation of EYA1 and EYA2 (By similarity). Binds the 5'-TCA[AG][AG]TTNC-3' motif present in the MEF3 element in the MYOG promoter and CIDEA enhancer (By similarity). Regulates the expression of numerous genes, including MYC, CCNA1, CCND1 and EZR (By similarity). Acts as an activator of the IGFBP5 promoter, probably coactivated by EYA2 (By similarity). Repression of precursor cell proliferation in myoblasts is switched to activation through recruitment of EYA3 to the SIX1-DACH1 complex (By similarity). During myogenesis, seems to act together with EYA2 and DACH2 (By similarity). Regulates the expression of CCNA1 (By similarity). Promotes brown adipocyte differentiation (By similarity).</text>
</comment>
<comment type="subunit">
    <text evidence="2 3">Interacts with DACH1 (By similarity). Interacts with EYA1 (By similarity). Interacts with EYA2 (By similarity). Interacts with CDH1 (By similarity). Interacts with TBX18 (By similarity). Interacts with CEBPA (By similarity). Interacts with CEBPB (By similarity). Interacts with EBF2 (By similarity).</text>
</comment>
<comment type="subcellular location">
    <subcellularLocation>
        <location evidence="4">Nucleus</location>
    </subcellularLocation>
    <subcellularLocation>
        <location evidence="1">Cytoplasm</location>
    </subcellularLocation>
</comment>
<comment type="PTM">
    <text evidence="1">Phosphorylated during interphase; becomes hyperphosphorylated during mitosis. Hyperphosphorylation impairs binding to promoter elements (By similarity).</text>
</comment>
<comment type="PTM">
    <text evidence="1">Ubiquitinated by the anaphase promoting complex (APC), leading to its proteasomal degradation.</text>
</comment>
<comment type="similarity">
    <text evidence="6">Belongs to the SIX/Sine oculis homeobox family.</text>
</comment>
<gene>
    <name type="primary">SIX1</name>
</gene>
<dbReference type="EMBL" id="DQ976442">
    <property type="protein sequence ID" value="ABM46628.1"/>
    <property type="molecule type" value="Genomic_DNA"/>
</dbReference>
<dbReference type="RefSeq" id="XP_004055308.1">
    <property type="nucleotide sequence ID" value="XM_004055260.5"/>
</dbReference>
<dbReference type="SMR" id="A1YER0"/>
<dbReference type="FunCoup" id="A1YER0">
    <property type="interactions" value="1376"/>
</dbReference>
<dbReference type="STRING" id="9593.ENSGGOP00000001372"/>
<dbReference type="Ensembl" id="ENSGGOT00000001397.3">
    <property type="protein sequence ID" value="ENSGGOP00000001372.2"/>
    <property type="gene ID" value="ENSGGOG00000001388.3"/>
</dbReference>
<dbReference type="GeneID" id="101128790"/>
<dbReference type="KEGG" id="ggo:101128790"/>
<dbReference type="CTD" id="6495"/>
<dbReference type="eggNOG" id="KOG0775">
    <property type="taxonomic scope" value="Eukaryota"/>
</dbReference>
<dbReference type="GeneTree" id="ENSGT00940000156487"/>
<dbReference type="HOGENOM" id="CLU_046914_2_0_1"/>
<dbReference type="InParanoid" id="A1YER0"/>
<dbReference type="OMA" id="YKAHYVE"/>
<dbReference type="OrthoDB" id="6562at9604"/>
<dbReference type="Proteomes" id="UP000001519">
    <property type="component" value="Chromosome 14"/>
</dbReference>
<dbReference type="Bgee" id="ENSGGOG00000001388">
    <property type="expression patterns" value="Expressed in testis and 2 other cell types or tissues"/>
</dbReference>
<dbReference type="GO" id="GO:0005737">
    <property type="term" value="C:cytoplasm"/>
    <property type="evidence" value="ECO:0007669"/>
    <property type="project" value="UniProtKB-SubCell"/>
</dbReference>
<dbReference type="GO" id="GO:0005730">
    <property type="term" value="C:nucleolus"/>
    <property type="evidence" value="ECO:0007669"/>
    <property type="project" value="Ensembl"/>
</dbReference>
<dbReference type="GO" id="GO:0005654">
    <property type="term" value="C:nucleoplasm"/>
    <property type="evidence" value="ECO:0007669"/>
    <property type="project" value="Ensembl"/>
</dbReference>
<dbReference type="GO" id="GO:0005634">
    <property type="term" value="C:nucleus"/>
    <property type="evidence" value="ECO:0000250"/>
    <property type="project" value="UniProtKB"/>
</dbReference>
<dbReference type="GO" id="GO:0005667">
    <property type="term" value="C:transcription regulator complex"/>
    <property type="evidence" value="ECO:0000250"/>
    <property type="project" value="UniProtKB"/>
</dbReference>
<dbReference type="GO" id="GO:0003682">
    <property type="term" value="F:chromatin binding"/>
    <property type="evidence" value="ECO:0007669"/>
    <property type="project" value="Ensembl"/>
</dbReference>
<dbReference type="GO" id="GO:0001228">
    <property type="term" value="F:DNA-binding transcription activator activity, RNA polymerase II-specific"/>
    <property type="evidence" value="ECO:0007669"/>
    <property type="project" value="Ensembl"/>
</dbReference>
<dbReference type="GO" id="GO:0003700">
    <property type="term" value="F:DNA-binding transcription factor activity"/>
    <property type="evidence" value="ECO:0000250"/>
    <property type="project" value="UniProtKB"/>
</dbReference>
<dbReference type="GO" id="GO:0000981">
    <property type="term" value="F:DNA-binding transcription factor activity, RNA polymerase II-specific"/>
    <property type="evidence" value="ECO:0000318"/>
    <property type="project" value="GO_Central"/>
</dbReference>
<dbReference type="GO" id="GO:0000978">
    <property type="term" value="F:RNA polymerase II cis-regulatory region sequence-specific DNA binding"/>
    <property type="evidence" value="ECO:0000318"/>
    <property type="project" value="GO_Central"/>
</dbReference>
<dbReference type="GO" id="GO:0043565">
    <property type="term" value="F:sequence-specific DNA binding"/>
    <property type="evidence" value="ECO:0000250"/>
    <property type="project" value="UniProtKB"/>
</dbReference>
<dbReference type="GO" id="GO:0035909">
    <property type="term" value="P:aorta morphogenesis"/>
    <property type="evidence" value="ECO:0007669"/>
    <property type="project" value="Ensembl"/>
</dbReference>
<dbReference type="GO" id="GO:0006915">
    <property type="term" value="P:apoptotic process"/>
    <property type="evidence" value="ECO:0007669"/>
    <property type="project" value="UniProtKB-KW"/>
</dbReference>
<dbReference type="GO" id="GO:0001658">
    <property type="term" value="P:branching involved in ureteric bud morphogenesis"/>
    <property type="evidence" value="ECO:0000250"/>
    <property type="project" value="UniProtKB"/>
</dbReference>
<dbReference type="GO" id="GO:0090103">
    <property type="term" value="P:cochlea morphogenesis"/>
    <property type="evidence" value="ECO:0007669"/>
    <property type="project" value="Ensembl"/>
</dbReference>
<dbReference type="GO" id="GO:0048701">
    <property type="term" value="P:embryonic cranial skeleton morphogenesis"/>
    <property type="evidence" value="ECO:0000250"/>
    <property type="project" value="UniProtKB"/>
</dbReference>
<dbReference type="GO" id="GO:0048704">
    <property type="term" value="P:embryonic skeletal system morphogenesis"/>
    <property type="evidence" value="ECO:0000250"/>
    <property type="project" value="UniProtKB"/>
</dbReference>
<dbReference type="GO" id="GO:0086100">
    <property type="term" value="P:endothelin receptor signaling pathway"/>
    <property type="evidence" value="ECO:0007669"/>
    <property type="project" value="Ensembl"/>
</dbReference>
<dbReference type="GO" id="GO:0030855">
    <property type="term" value="P:epithelial cell differentiation"/>
    <property type="evidence" value="ECO:0000250"/>
    <property type="project" value="UniProtKB"/>
</dbReference>
<dbReference type="GO" id="GO:0021610">
    <property type="term" value="P:facial nerve morphogenesis"/>
    <property type="evidence" value="ECO:0007669"/>
    <property type="project" value="Ensembl"/>
</dbReference>
<dbReference type="GO" id="GO:0061197">
    <property type="term" value="P:fungiform papilla morphogenesis"/>
    <property type="evidence" value="ECO:0007669"/>
    <property type="project" value="Ensembl"/>
</dbReference>
<dbReference type="GO" id="GO:0010467">
    <property type="term" value="P:gene expression"/>
    <property type="evidence" value="ECO:0007669"/>
    <property type="project" value="Ensembl"/>
</dbReference>
<dbReference type="GO" id="GO:0048699">
    <property type="term" value="P:generation of neurons"/>
    <property type="evidence" value="ECO:0000250"/>
    <property type="project" value="UniProtKB"/>
</dbReference>
<dbReference type="GO" id="GO:0048839">
    <property type="term" value="P:inner ear development"/>
    <property type="evidence" value="ECO:0000250"/>
    <property type="project" value="UniProtKB"/>
</dbReference>
<dbReference type="GO" id="GO:0042472">
    <property type="term" value="P:inner ear morphogenesis"/>
    <property type="evidence" value="ECO:0000250"/>
    <property type="project" value="UniProtKB"/>
</dbReference>
<dbReference type="GO" id="GO:0001822">
    <property type="term" value="P:kidney development"/>
    <property type="evidence" value="ECO:0000250"/>
    <property type="project" value="UniProtKB"/>
</dbReference>
<dbReference type="GO" id="GO:0072198">
    <property type="term" value="P:mesenchymal cell proliferation involved in ureter development"/>
    <property type="evidence" value="ECO:0007669"/>
    <property type="project" value="Ensembl"/>
</dbReference>
<dbReference type="GO" id="GO:0072172">
    <property type="term" value="P:mesonephric tubule formation"/>
    <property type="evidence" value="ECO:0000250"/>
    <property type="project" value="UniProtKB"/>
</dbReference>
<dbReference type="GO" id="GO:0072075">
    <property type="term" value="P:metanephric mesenchyme development"/>
    <property type="evidence" value="ECO:0000250"/>
    <property type="project" value="UniProtKB"/>
</dbReference>
<dbReference type="GO" id="GO:0042474">
    <property type="term" value="P:middle ear morphogenesis"/>
    <property type="evidence" value="ECO:0007669"/>
    <property type="project" value="Ensembl"/>
</dbReference>
<dbReference type="GO" id="GO:0051451">
    <property type="term" value="P:myoblast migration"/>
    <property type="evidence" value="ECO:0000250"/>
    <property type="project" value="UniProtKB"/>
</dbReference>
<dbReference type="GO" id="GO:0051450">
    <property type="term" value="P:myoblast proliferation"/>
    <property type="evidence" value="ECO:0007669"/>
    <property type="project" value="Ensembl"/>
</dbReference>
<dbReference type="GO" id="GO:0061055">
    <property type="term" value="P:myotome development"/>
    <property type="evidence" value="ECO:0007669"/>
    <property type="project" value="Ensembl"/>
</dbReference>
<dbReference type="GO" id="GO:0043524">
    <property type="term" value="P:negative regulation of neuron apoptotic process"/>
    <property type="evidence" value="ECO:0000250"/>
    <property type="project" value="UniProtKB"/>
</dbReference>
<dbReference type="GO" id="GO:0000122">
    <property type="term" value="P:negative regulation of transcription by RNA polymerase II"/>
    <property type="evidence" value="ECO:0007669"/>
    <property type="project" value="Ensembl"/>
</dbReference>
<dbReference type="GO" id="GO:0014033">
    <property type="term" value="P:neural crest cell differentiation"/>
    <property type="evidence" value="ECO:0007669"/>
    <property type="project" value="Ensembl"/>
</dbReference>
<dbReference type="GO" id="GO:0048665">
    <property type="term" value="P:neuron fate specification"/>
    <property type="evidence" value="ECO:0007669"/>
    <property type="project" value="Ensembl"/>
</dbReference>
<dbReference type="GO" id="GO:0007219">
    <property type="term" value="P:Notch signaling pathway"/>
    <property type="evidence" value="ECO:0007669"/>
    <property type="project" value="Ensembl"/>
</dbReference>
<dbReference type="GO" id="GO:0030910">
    <property type="term" value="P:olfactory placode formation"/>
    <property type="evidence" value="ECO:0007669"/>
    <property type="project" value="Ensembl"/>
</dbReference>
<dbReference type="GO" id="GO:0001759">
    <property type="term" value="P:organ induction"/>
    <property type="evidence" value="ECO:0000250"/>
    <property type="project" value="UniProtKB"/>
</dbReference>
<dbReference type="GO" id="GO:0071599">
    <property type="term" value="P:otic vesicle development"/>
    <property type="evidence" value="ECO:0007669"/>
    <property type="project" value="Ensembl"/>
</dbReference>
<dbReference type="GO" id="GO:0003151">
    <property type="term" value="P:outflow tract morphogenesis"/>
    <property type="evidence" value="ECO:0007669"/>
    <property type="project" value="Ensembl"/>
</dbReference>
<dbReference type="GO" id="GO:0007389">
    <property type="term" value="P:pattern specification process"/>
    <property type="evidence" value="ECO:0000250"/>
    <property type="project" value="UniProtKB"/>
</dbReference>
<dbReference type="GO" id="GO:0060037">
    <property type="term" value="P:pharyngeal system development"/>
    <property type="evidence" value="ECO:0007669"/>
    <property type="project" value="Ensembl"/>
</dbReference>
<dbReference type="GO" id="GO:0090190">
    <property type="term" value="P:positive regulation of branching involved in ureteric bud morphogenesis"/>
    <property type="evidence" value="ECO:0000250"/>
    <property type="project" value="UniProtKB"/>
</dbReference>
<dbReference type="GO" id="GO:0090336">
    <property type="term" value="P:positive regulation of brown fat cell differentiation"/>
    <property type="evidence" value="ECO:0000250"/>
    <property type="project" value="UniProtKB"/>
</dbReference>
<dbReference type="GO" id="GO:0045893">
    <property type="term" value="P:positive regulation of DNA-templated transcription"/>
    <property type="evidence" value="ECO:0000250"/>
    <property type="project" value="UniProtKB"/>
</dbReference>
<dbReference type="GO" id="GO:2000729">
    <property type="term" value="P:positive regulation of mesenchymal cell proliferation involved in ureter development"/>
    <property type="evidence" value="ECO:0007669"/>
    <property type="project" value="Ensembl"/>
</dbReference>
<dbReference type="GO" id="GO:2000288">
    <property type="term" value="P:positive regulation of myoblast proliferation"/>
    <property type="evidence" value="ECO:0007669"/>
    <property type="project" value="Ensembl"/>
</dbReference>
<dbReference type="GO" id="GO:0072513">
    <property type="term" value="P:positive regulation of secondary heart field cardioblast proliferation"/>
    <property type="evidence" value="ECO:0007669"/>
    <property type="project" value="Ensembl"/>
</dbReference>
<dbReference type="GO" id="GO:0045944">
    <property type="term" value="P:positive regulation of transcription by RNA polymerase II"/>
    <property type="evidence" value="ECO:0000250"/>
    <property type="project" value="UniProtKB"/>
</dbReference>
<dbReference type="GO" id="GO:0072107">
    <property type="term" value="P:positive regulation of ureteric bud formation"/>
    <property type="evidence" value="ECO:0000250"/>
    <property type="project" value="UniProtKB"/>
</dbReference>
<dbReference type="GO" id="GO:0034504">
    <property type="term" value="P:protein localization to nucleus"/>
    <property type="evidence" value="ECO:0007669"/>
    <property type="project" value="Ensembl"/>
</dbReference>
<dbReference type="GO" id="GO:0072095">
    <property type="term" value="P:regulation of branch elongation involved in ureteric bud branching"/>
    <property type="evidence" value="ECO:0000250"/>
    <property type="project" value="UniProtKB"/>
</dbReference>
<dbReference type="GO" id="GO:0006355">
    <property type="term" value="P:regulation of DNA-templated transcription"/>
    <property type="evidence" value="ECO:0000250"/>
    <property type="project" value="UniProtKB"/>
</dbReference>
<dbReference type="GO" id="GO:0050678">
    <property type="term" value="P:regulation of epithelial cell proliferation"/>
    <property type="evidence" value="ECO:0007669"/>
    <property type="project" value="Ensembl"/>
</dbReference>
<dbReference type="GO" id="GO:0045664">
    <property type="term" value="P:regulation of neuron differentiation"/>
    <property type="evidence" value="ECO:0000250"/>
    <property type="project" value="UniProtKB"/>
</dbReference>
<dbReference type="GO" id="GO:0032880">
    <property type="term" value="P:regulation of protein localization"/>
    <property type="evidence" value="ECO:0007669"/>
    <property type="project" value="Ensembl"/>
</dbReference>
<dbReference type="GO" id="GO:2001014">
    <property type="term" value="P:regulation of skeletal muscle cell differentiation"/>
    <property type="evidence" value="ECO:0007669"/>
    <property type="project" value="Ensembl"/>
</dbReference>
<dbReference type="GO" id="GO:0014857">
    <property type="term" value="P:regulation of skeletal muscle cell proliferation"/>
    <property type="evidence" value="ECO:0000318"/>
    <property type="project" value="GO_Central"/>
</dbReference>
<dbReference type="GO" id="GO:0014842">
    <property type="term" value="P:regulation of skeletal muscle satellite cell proliferation"/>
    <property type="evidence" value="ECO:0007669"/>
    <property type="project" value="Ensembl"/>
</dbReference>
<dbReference type="GO" id="GO:0008582">
    <property type="term" value="P:regulation of synaptic assembly at neuromuscular junction"/>
    <property type="evidence" value="ECO:0007669"/>
    <property type="project" value="Ensembl"/>
</dbReference>
<dbReference type="GO" id="GO:0006357">
    <property type="term" value="P:regulation of transcription by RNA polymerase II"/>
    <property type="evidence" value="ECO:0000318"/>
    <property type="project" value="GO_Central"/>
</dbReference>
<dbReference type="GO" id="GO:0007605">
    <property type="term" value="P:sensory perception of sound"/>
    <property type="evidence" value="ECO:0007669"/>
    <property type="project" value="Ensembl"/>
</dbReference>
<dbReference type="GO" id="GO:0048741">
    <property type="term" value="P:skeletal muscle fiber development"/>
    <property type="evidence" value="ECO:0000318"/>
    <property type="project" value="GO_Central"/>
</dbReference>
<dbReference type="GO" id="GO:0007519">
    <property type="term" value="P:skeletal muscle tissue development"/>
    <property type="evidence" value="ECO:0000250"/>
    <property type="project" value="UniProtKB"/>
</dbReference>
<dbReference type="GO" id="GO:0048538">
    <property type="term" value="P:thymus development"/>
    <property type="evidence" value="ECO:0000250"/>
    <property type="project" value="UniProtKB"/>
</dbReference>
<dbReference type="GO" id="GO:0030878">
    <property type="term" value="P:thyroid gland development"/>
    <property type="evidence" value="ECO:0000250"/>
    <property type="project" value="UniProtKB"/>
</dbReference>
<dbReference type="GO" id="GO:0061551">
    <property type="term" value="P:trigeminal ganglion development"/>
    <property type="evidence" value="ECO:0007669"/>
    <property type="project" value="Ensembl"/>
</dbReference>
<dbReference type="GO" id="GO:0072193">
    <property type="term" value="P:ureter smooth muscle cell differentiation"/>
    <property type="evidence" value="ECO:0007669"/>
    <property type="project" value="Ensembl"/>
</dbReference>
<dbReference type="GO" id="GO:0001657">
    <property type="term" value="P:ureteric bud development"/>
    <property type="evidence" value="ECO:0000250"/>
    <property type="project" value="UniProtKB"/>
</dbReference>
<dbReference type="CDD" id="cd00086">
    <property type="entry name" value="homeodomain"/>
    <property type="match status" value="1"/>
</dbReference>
<dbReference type="FunFam" id="1.10.10.60:FF:000063">
    <property type="entry name" value="SIX homeobox 2"/>
    <property type="match status" value="1"/>
</dbReference>
<dbReference type="Gene3D" id="1.10.10.60">
    <property type="entry name" value="Homeodomain-like"/>
    <property type="match status" value="1"/>
</dbReference>
<dbReference type="InterPro" id="IPR001356">
    <property type="entry name" value="HD"/>
</dbReference>
<dbReference type="InterPro" id="IPR017970">
    <property type="entry name" value="Homeobox_CS"/>
</dbReference>
<dbReference type="InterPro" id="IPR009057">
    <property type="entry name" value="Homeodomain-like_sf"/>
</dbReference>
<dbReference type="InterPro" id="IPR008422">
    <property type="entry name" value="KN_HD"/>
</dbReference>
<dbReference type="InterPro" id="IPR031701">
    <property type="entry name" value="SIX1_SD"/>
</dbReference>
<dbReference type="PANTHER" id="PTHR10390">
    <property type="entry name" value="HOMEOBOX PROTEIN SIX"/>
    <property type="match status" value="1"/>
</dbReference>
<dbReference type="PANTHER" id="PTHR10390:SF13">
    <property type="entry name" value="HOMEOBOX PROTEIN SIX1"/>
    <property type="match status" value="1"/>
</dbReference>
<dbReference type="Pfam" id="PF05920">
    <property type="entry name" value="Homeobox_KN"/>
    <property type="match status" value="1"/>
</dbReference>
<dbReference type="Pfam" id="PF16878">
    <property type="entry name" value="SIX1_SD"/>
    <property type="match status" value="1"/>
</dbReference>
<dbReference type="SMART" id="SM00389">
    <property type="entry name" value="HOX"/>
    <property type="match status" value="1"/>
</dbReference>
<dbReference type="SUPFAM" id="SSF46689">
    <property type="entry name" value="Homeodomain-like"/>
    <property type="match status" value="1"/>
</dbReference>
<dbReference type="PROSITE" id="PS00027">
    <property type="entry name" value="HOMEOBOX_1"/>
    <property type="match status" value="1"/>
</dbReference>
<dbReference type="PROSITE" id="PS50071">
    <property type="entry name" value="HOMEOBOX_2"/>
    <property type="match status" value="1"/>
</dbReference>
<accession>A1YER0</accession>
<keyword id="KW-0010">Activator</keyword>
<keyword id="KW-0053">Apoptosis</keyword>
<keyword id="KW-0963">Cytoplasm</keyword>
<keyword id="KW-0217">Developmental protein</keyword>
<keyword id="KW-0238">DNA-binding</keyword>
<keyword id="KW-0371">Homeobox</keyword>
<keyword id="KW-0539">Nucleus</keyword>
<keyword id="KW-0597">Phosphoprotein</keyword>
<keyword id="KW-1185">Reference proteome</keyword>
<keyword id="KW-0678">Repressor</keyword>
<keyword id="KW-0804">Transcription</keyword>
<keyword id="KW-0805">Transcription regulation</keyword>
<keyword id="KW-0832">Ubl conjugation</keyword>
<feature type="chain" id="PRO_0000285458" description="Homeobox protein SIX1">
    <location>
        <begin position="1"/>
        <end position="284"/>
    </location>
</feature>
<feature type="DNA-binding region" description="Homeobox" evidence="4">
    <location>
        <begin position="124"/>
        <end position="183"/>
    </location>
</feature>
<feature type="region of interest" description="Disordered" evidence="5">
    <location>
        <begin position="168"/>
        <end position="269"/>
    </location>
</feature>
<feature type="compositionally biased region" description="Basic and acidic residues" evidence="5">
    <location>
        <begin position="179"/>
        <end position="190"/>
    </location>
</feature>
<feature type="compositionally biased region" description="Polar residues" evidence="5">
    <location>
        <begin position="242"/>
        <end position="269"/>
    </location>
</feature>
<organism>
    <name type="scientific">Gorilla gorilla gorilla</name>
    <name type="common">Western lowland gorilla</name>
    <dbReference type="NCBI Taxonomy" id="9595"/>
    <lineage>
        <taxon>Eukaryota</taxon>
        <taxon>Metazoa</taxon>
        <taxon>Chordata</taxon>
        <taxon>Craniata</taxon>
        <taxon>Vertebrata</taxon>
        <taxon>Euteleostomi</taxon>
        <taxon>Mammalia</taxon>
        <taxon>Eutheria</taxon>
        <taxon>Euarchontoglires</taxon>
        <taxon>Primates</taxon>
        <taxon>Haplorrhini</taxon>
        <taxon>Catarrhini</taxon>
        <taxon>Hominidae</taxon>
        <taxon>Gorilla</taxon>
    </lineage>
</organism>